<accession>Q00619</accession>
<evidence type="ECO:0000255" key="1"/>
<evidence type="ECO:0000305" key="2"/>
<feature type="chain" id="PRO_0000195074" description="Pheromone P-factor receptor">
    <location>
        <begin position="1"/>
        <end position="348"/>
    </location>
</feature>
<feature type="transmembrane region" description="Helical; Name=1" evidence="1">
    <location>
        <begin position="46"/>
        <end position="69"/>
    </location>
</feature>
<feature type="transmembrane region" description="Helical; Name=2" evidence="1">
    <location>
        <begin position="79"/>
        <end position="103"/>
    </location>
</feature>
<feature type="transmembrane region" description="Helical; Name=3" evidence="1">
    <location>
        <begin position="125"/>
        <end position="141"/>
    </location>
</feature>
<feature type="transmembrane region" description="Helical; Name=4" evidence="1">
    <location>
        <begin position="162"/>
        <end position="180"/>
    </location>
</feature>
<feature type="transmembrane region" description="Helical; Name=5" evidence="1">
    <location>
        <begin position="207"/>
        <end position="225"/>
    </location>
</feature>
<feature type="transmembrane region" description="Helical; Name=6" evidence="1">
    <location>
        <begin position="249"/>
        <end position="267"/>
    </location>
</feature>
<feature type="transmembrane region" description="Helical; Name=7" evidence="1">
    <location>
        <begin position="283"/>
        <end position="301"/>
    </location>
</feature>
<gene>
    <name type="primary">mam2</name>
    <name type="ORF">SPAC11H11.04</name>
</gene>
<reference key="1">
    <citation type="journal article" date="1991" name="EMBO J.">
        <title>The Schizosaccharomyces pombe mam2 gene encodes a putative pheromone receptor which has a significant homology with the Saccharomyces cerevisiae Ste2 protein.</title>
        <authorList>
            <person name="Kitamura K."/>
            <person name="Shimoda C."/>
        </authorList>
    </citation>
    <scope>NUCLEOTIDE SEQUENCE [GENOMIC DNA]</scope>
    <source>
        <strain>ATCC 38365 / 975</strain>
    </source>
</reference>
<reference key="2">
    <citation type="journal article" date="2002" name="Nature">
        <title>The genome sequence of Schizosaccharomyces pombe.</title>
        <authorList>
            <person name="Wood V."/>
            <person name="Gwilliam R."/>
            <person name="Rajandream M.A."/>
            <person name="Lyne M.H."/>
            <person name="Lyne R."/>
            <person name="Stewart A."/>
            <person name="Sgouros J.G."/>
            <person name="Peat N."/>
            <person name="Hayles J."/>
            <person name="Baker S.G."/>
            <person name="Basham D."/>
            <person name="Bowman S."/>
            <person name="Brooks K."/>
            <person name="Brown D."/>
            <person name="Brown S."/>
            <person name="Chillingworth T."/>
            <person name="Churcher C.M."/>
            <person name="Collins M."/>
            <person name="Connor R."/>
            <person name="Cronin A."/>
            <person name="Davis P."/>
            <person name="Feltwell T."/>
            <person name="Fraser A."/>
            <person name="Gentles S."/>
            <person name="Goble A."/>
            <person name="Hamlin N."/>
            <person name="Harris D.E."/>
            <person name="Hidalgo J."/>
            <person name="Hodgson G."/>
            <person name="Holroyd S."/>
            <person name="Hornsby T."/>
            <person name="Howarth S."/>
            <person name="Huckle E.J."/>
            <person name="Hunt S."/>
            <person name="Jagels K."/>
            <person name="James K.D."/>
            <person name="Jones L."/>
            <person name="Jones M."/>
            <person name="Leather S."/>
            <person name="McDonald S."/>
            <person name="McLean J."/>
            <person name="Mooney P."/>
            <person name="Moule S."/>
            <person name="Mungall K.L."/>
            <person name="Murphy L.D."/>
            <person name="Niblett D."/>
            <person name="Odell C."/>
            <person name="Oliver K."/>
            <person name="O'Neil S."/>
            <person name="Pearson D."/>
            <person name="Quail M.A."/>
            <person name="Rabbinowitsch E."/>
            <person name="Rutherford K.M."/>
            <person name="Rutter S."/>
            <person name="Saunders D."/>
            <person name="Seeger K."/>
            <person name="Sharp S."/>
            <person name="Skelton J."/>
            <person name="Simmonds M.N."/>
            <person name="Squares R."/>
            <person name="Squares S."/>
            <person name="Stevens K."/>
            <person name="Taylor K."/>
            <person name="Taylor R.G."/>
            <person name="Tivey A."/>
            <person name="Walsh S.V."/>
            <person name="Warren T."/>
            <person name="Whitehead S."/>
            <person name="Woodward J.R."/>
            <person name="Volckaert G."/>
            <person name="Aert R."/>
            <person name="Robben J."/>
            <person name="Grymonprez B."/>
            <person name="Weltjens I."/>
            <person name="Vanstreels E."/>
            <person name="Rieger M."/>
            <person name="Schaefer M."/>
            <person name="Mueller-Auer S."/>
            <person name="Gabel C."/>
            <person name="Fuchs M."/>
            <person name="Duesterhoeft A."/>
            <person name="Fritzc C."/>
            <person name="Holzer E."/>
            <person name="Moestl D."/>
            <person name="Hilbert H."/>
            <person name="Borzym K."/>
            <person name="Langer I."/>
            <person name="Beck A."/>
            <person name="Lehrach H."/>
            <person name="Reinhardt R."/>
            <person name="Pohl T.M."/>
            <person name="Eger P."/>
            <person name="Zimmermann W."/>
            <person name="Wedler H."/>
            <person name="Wambutt R."/>
            <person name="Purnelle B."/>
            <person name="Goffeau A."/>
            <person name="Cadieu E."/>
            <person name="Dreano S."/>
            <person name="Gloux S."/>
            <person name="Lelaure V."/>
            <person name="Mottier S."/>
            <person name="Galibert F."/>
            <person name="Aves S.J."/>
            <person name="Xiang Z."/>
            <person name="Hunt C."/>
            <person name="Moore K."/>
            <person name="Hurst S.M."/>
            <person name="Lucas M."/>
            <person name="Rochet M."/>
            <person name="Gaillardin C."/>
            <person name="Tallada V.A."/>
            <person name="Garzon A."/>
            <person name="Thode G."/>
            <person name="Daga R.R."/>
            <person name="Cruzado L."/>
            <person name="Jimenez J."/>
            <person name="Sanchez M."/>
            <person name="del Rey F."/>
            <person name="Benito J."/>
            <person name="Dominguez A."/>
            <person name="Revuelta J.L."/>
            <person name="Moreno S."/>
            <person name="Armstrong J."/>
            <person name="Forsburg S.L."/>
            <person name="Cerutti L."/>
            <person name="Lowe T."/>
            <person name="McCombie W.R."/>
            <person name="Paulsen I."/>
            <person name="Potashkin J."/>
            <person name="Shpakovski G.V."/>
            <person name="Ussery D."/>
            <person name="Barrell B.G."/>
            <person name="Nurse P."/>
        </authorList>
    </citation>
    <scope>NUCLEOTIDE SEQUENCE [LARGE SCALE GENOMIC DNA]</scope>
    <source>
        <strain>972 / ATCC 24843</strain>
    </source>
</reference>
<name>MAM2_SCHPO</name>
<comment type="function">
    <text>Receptor for the peptide pheromone P-factor, a mating factor of S.pombe. Pheromone signaling is essential for initiation of meiosis in S.pombe; P-factor signaling alone may be sufficient.</text>
</comment>
<comment type="subcellular location">
    <subcellularLocation>
        <location>Membrane</location>
        <topology>Multi-pass membrane protein</topology>
    </subcellularLocation>
</comment>
<comment type="similarity">
    <text evidence="2">Belongs to the G-protein coupled receptor 4 family.</text>
</comment>
<organism>
    <name type="scientific">Schizosaccharomyces pombe (strain 972 / ATCC 24843)</name>
    <name type="common">Fission yeast</name>
    <dbReference type="NCBI Taxonomy" id="284812"/>
    <lineage>
        <taxon>Eukaryota</taxon>
        <taxon>Fungi</taxon>
        <taxon>Dikarya</taxon>
        <taxon>Ascomycota</taxon>
        <taxon>Taphrinomycotina</taxon>
        <taxon>Schizosaccharomycetes</taxon>
        <taxon>Schizosaccharomycetales</taxon>
        <taxon>Schizosaccharomycetaceae</taxon>
        <taxon>Schizosaccharomyces</taxon>
    </lineage>
</organism>
<dbReference type="EMBL" id="X61672">
    <property type="protein sequence ID" value="CAA43846.1"/>
    <property type="molecule type" value="Genomic_DNA"/>
</dbReference>
<dbReference type="EMBL" id="CU329670">
    <property type="protein sequence ID" value="CAB59800.1"/>
    <property type="molecule type" value="Genomic_DNA"/>
</dbReference>
<dbReference type="PIR" id="S18521">
    <property type="entry name" value="S18521"/>
</dbReference>
<dbReference type="RefSeq" id="NP_594722.1">
    <property type="nucleotide sequence ID" value="NM_001020150.2"/>
</dbReference>
<dbReference type="SMR" id="Q00619"/>
<dbReference type="BioGRID" id="278103">
    <property type="interactions" value="4"/>
</dbReference>
<dbReference type="FunCoup" id="Q00619">
    <property type="interactions" value="64"/>
</dbReference>
<dbReference type="STRING" id="284812.Q00619"/>
<dbReference type="PaxDb" id="4896-SPAC11H11.04.1"/>
<dbReference type="EnsemblFungi" id="SPAC11H11.04.1">
    <property type="protein sequence ID" value="SPAC11H11.04.1:pep"/>
    <property type="gene ID" value="SPAC11H11.04"/>
</dbReference>
<dbReference type="GeneID" id="2541606"/>
<dbReference type="KEGG" id="spo:2541606"/>
<dbReference type="PomBase" id="SPAC11H11.04">
    <property type="gene designation" value="mam2"/>
</dbReference>
<dbReference type="VEuPathDB" id="FungiDB:SPAC11H11.04"/>
<dbReference type="eggNOG" id="ENOG502QTV4">
    <property type="taxonomic scope" value="Eukaryota"/>
</dbReference>
<dbReference type="HOGENOM" id="CLU_035056_1_0_1"/>
<dbReference type="InParanoid" id="Q00619"/>
<dbReference type="OMA" id="VSICYFS"/>
<dbReference type="PhylomeDB" id="Q00619"/>
<dbReference type="PRO" id="PR:Q00619"/>
<dbReference type="Proteomes" id="UP000002485">
    <property type="component" value="Chromosome I"/>
</dbReference>
<dbReference type="GO" id="GO:0005938">
    <property type="term" value="C:cell cortex"/>
    <property type="evidence" value="ECO:0000314"/>
    <property type="project" value="PomBase"/>
</dbReference>
<dbReference type="GO" id="GO:0032153">
    <property type="term" value="C:cell division site"/>
    <property type="evidence" value="ECO:0007005"/>
    <property type="project" value="PomBase"/>
</dbReference>
<dbReference type="GO" id="GO:0051286">
    <property type="term" value="C:cell tip"/>
    <property type="evidence" value="ECO:0007005"/>
    <property type="project" value="PomBase"/>
</dbReference>
<dbReference type="GO" id="GO:0000324">
    <property type="term" value="C:fungal-type vacuole"/>
    <property type="evidence" value="ECO:0007005"/>
    <property type="project" value="PomBase"/>
</dbReference>
<dbReference type="GO" id="GO:0038038">
    <property type="term" value="C:G protein-coupled receptor homodimeric complex"/>
    <property type="evidence" value="ECO:0000314"/>
    <property type="project" value="PomBase"/>
</dbReference>
<dbReference type="GO" id="GO:0070250">
    <property type="term" value="C:mating projection membrane"/>
    <property type="evidence" value="ECO:0000314"/>
    <property type="project" value="PomBase"/>
</dbReference>
<dbReference type="GO" id="GO:0005886">
    <property type="term" value="C:plasma membrane"/>
    <property type="evidence" value="ECO:0000314"/>
    <property type="project" value="PomBase"/>
</dbReference>
<dbReference type="GO" id="GO:0031520">
    <property type="term" value="C:plasma membrane of cell tip"/>
    <property type="evidence" value="ECO:0000314"/>
    <property type="project" value="PomBase"/>
</dbReference>
<dbReference type="GO" id="GO:0004932">
    <property type="term" value="F:mating-type factor pheromone receptor activity"/>
    <property type="evidence" value="ECO:0000318"/>
    <property type="project" value="GO_Central"/>
</dbReference>
<dbReference type="GO" id="GO:0036320">
    <property type="term" value="F:mating-type P-factor pheromone receptor activity"/>
    <property type="evidence" value="ECO:0000314"/>
    <property type="project" value="PomBase"/>
</dbReference>
<dbReference type="GO" id="GO:0000750">
    <property type="term" value="P:pheromone-dependent signal transduction involved in conjugation with cellular fusion"/>
    <property type="evidence" value="ECO:0000318"/>
    <property type="project" value="GO_Central"/>
</dbReference>
<dbReference type="GO" id="GO:0031139">
    <property type="term" value="P:positive regulation of conjugation with cellular fusion"/>
    <property type="evidence" value="ECO:0000315"/>
    <property type="project" value="PomBase"/>
</dbReference>
<dbReference type="GO" id="GO:0062038">
    <property type="term" value="P:positive regulation of pheromone response MAPK cascade"/>
    <property type="evidence" value="ECO:0000315"/>
    <property type="project" value="PomBase"/>
</dbReference>
<dbReference type="CDD" id="cd14939">
    <property type="entry name" value="7tmD_STE2"/>
    <property type="match status" value="1"/>
</dbReference>
<dbReference type="Gene3D" id="1.10.287.920">
    <property type="entry name" value="Pheromone alpha factor receptor"/>
    <property type="match status" value="1"/>
</dbReference>
<dbReference type="InterPro" id="IPR000366">
    <property type="entry name" value="GPCR_STE2"/>
</dbReference>
<dbReference type="InterPro" id="IPR027458">
    <property type="entry name" value="STE2_TM1-TM2_sf"/>
</dbReference>
<dbReference type="PANTHER" id="PTHR28009">
    <property type="entry name" value="PHEROMONE ALPHA FACTOR RECEPTOR"/>
    <property type="match status" value="1"/>
</dbReference>
<dbReference type="PANTHER" id="PTHR28009:SF1">
    <property type="entry name" value="PHEROMONE ALPHA FACTOR RECEPTOR"/>
    <property type="match status" value="1"/>
</dbReference>
<dbReference type="Pfam" id="PF02116">
    <property type="entry name" value="STE2"/>
    <property type="match status" value="1"/>
</dbReference>
<dbReference type="PRINTS" id="PR00250">
    <property type="entry name" value="GPCRSTE2"/>
</dbReference>
<keyword id="KW-0297">G-protein coupled receptor</keyword>
<keyword id="KW-0472">Membrane</keyword>
<keyword id="KW-0589">Pheromone response</keyword>
<keyword id="KW-0675">Receptor</keyword>
<keyword id="KW-1185">Reference proteome</keyword>
<keyword id="KW-0807">Transducer</keyword>
<keyword id="KW-0812">Transmembrane</keyword>
<keyword id="KW-1133">Transmembrane helix</keyword>
<sequence>MRQPWWKDFTIPDASAIIHQNITIVSIVGEIEVPVSTIDAYERDRLLTGMTLSAQLALGVLTILMVCLLSSSEKRKHPVFVFNSASIVAMCLRAILNIVTICSNSYSILVNYGFILNMVHMYVHVFNILILLLAPVIIFTAEMSMMIQVRIICAHDRKTQRIMTVISACLTVLVLAFWITNMCQQIQYLLWLTPLSSKTIVGYSWPYFIAKILFAFSIIFHSGVFSYKLFRAILIRKKIGQFPFGPMQCILVISCQCLIVPATFTIIDSFIHTYDGFSSMTQCLLIISLPLSSLWASSTALKLQSMKTSSAQGETTEVSIRVDRTFDIKHTPSDDYSISDESETKKWT</sequence>
<protein>
    <recommendedName>
        <fullName>Pheromone P-factor receptor</fullName>
    </recommendedName>
</protein>
<proteinExistence type="inferred from homology"/>